<reference key="1">
    <citation type="journal article" date="2002" name="Nature">
        <title>Sequence and analysis of rice chromosome 4.</title>
        <authorList>
            <person name="Feng Q."/>
            <person name="Zhang Y."/>
            <person name="Hao P."/>
            <person name="Wang S."/>
            <person name="Fu G."/>
            <person name="Huang Y."/>
            <person name="Li Y."/>
            <person name="Zhu J."/>
            <person name="Liu Y."/>
            <person name="Hu X."/>
            <person name="Jia P."/>
            <person name="Zhang Y."/>
            <person name="Zhao Q."/>
            <person name="Ying K."/>
            <person name="Yu S."/>
            <person name="Tang Y."/>
            <person name="Weng Q."/>
            <person name="Zhang L."/>
            <person name="Lu Y."/>
            <person name="Mu J."/>
            <person name="Lu Y."/>
            <person name="Zhang L.S."/>
            <person name="Yu Z."/>
            <person name="Fan D."/>
            <person name="Liu X."/>
            <person name="Lu T."/>
            <person name="Li C."/>
            <person name="Wu Y."/>
            <person name="Sun T."/>
            <person name="Lei H."/>
            <person name="Li T."/>
            <person name="Hu H."/>
            <person name="Guan J."/>
            <person name="Wu M."/>
            <person name="Zhang R."/>
            <person name="Zhou B."/>
            <person name="Chen Z."/>
            <person name="Chen L."/>
            <person name="Jin Z."/>
            <person name="Wang R."/>
            <person name="Yin H."/>
            <person name="Cai Z."/>
            <person name="Ren S."/>
            <person name="Lv G."/>
            <person name="Gu W."/>
            <person name="Zhu G."/>
            <person name="Tu Y."/>
            <person name="Jia J."/>
            <person name="Zhang Y."/>
            <person name="Chen J."/>
            <person name="Kang H."/>
            <person name="Chen X."/>
            <person name="Shao C."/>
            <person name="Sun Y."/>
            <person name="Hu Q."/>
            <person name="Zhang X."/>
            <person name="Zhang W."/>
            <person name="Wang L."/>
            <person name="Ding C."/>
            <person name="Sheng H."/>
            <person name="Gu J."/>
            <person name="Chen S."/>
            <person name="Ni L."/>
            <person name="Zhu F."/>
            <person name="Chen W."/>
            <person name="Lan L."/>
            <person name="Lai Y."/>
            <person name="Cheng Z."/>
            <person name="Gu M."/>
            <person name="Jiang J."/>
            <person name="Li J."/>
            <person name="Hong G."/>
            <person name="Xue Y."/>
            <person name="Han B."/>
        </authorList>
    </citation>
    <scope>NUCLEOTIDE SEQUENCE [LARGE SCALE GENOMIC DNA]</scope>
    <source>
        <strain>cv. Nipponbare</strain>
    </source>
</reference>
<reference key="2">
    <citation type="journal article" date="2005" name="Nature">
        <title>The map-based sequence of the rice genome.</title>
        <authorList>
            <consortium name="International rice genome sequencing project (IRGSP)"/>
        </authorList>
    </citation>
    <scope>NUCLEOTIDE SEQUENCE [LARGE SCALE GENOMIC DNA]</scope>
    <source>
        <strain>cv. Nipponbare</strain>
    </source>
</reference>
<reference key="3">
    <citation type="journal article" date="2008" name="Nucleic Acids Res.">
        <title>The rice annotation project database (RAP-DB): 2008 update.</title>
        <authorList>
            <consortium name="The rice annotation project (RAP)"/>
        </authorList>
    </citation>
    <scope>GENOME REANNOTATION</scope>
    <source>
        <strain>cv. Nipponbare</strain>
    </source>
</reference>
<reference key="4">
    <citation type="journal article" date="2013" name="Rice">
        <title>Improvement of the Oryza sativa Nipponbare reference genome using next generation sequence and optical map data.</title>
        <authorList>
            <person name="Kawahara Y."/>
            <person name="de la Bastide M."/>
            <person name="Hamilton J.P."/>
            <person name="Kanamori H."/>
            <person name="McCombie W.R."/>
            <person name="Ouyang S."/>
            <person name="Schwartz D.C."/>
            <person name="Tanaka T."/>
            <person name="Wu J."/>
            <person name="Zhou S."/>
            <person name="Childs K.L."/>
            <person name="Davidson R.M."/>
            <person name="Lin H."/>
            <person name="Quesada-Ocampo L."/>
            <person name="Vaillancourt B."/>
            <person name="Sakai H."/>
            <person name="Lee S.S."/>
            <person name="Kim J."/>
            <person name="Numa H."/>
            <person name="Itoh T."/>
            <person name="Buell C.R."/>
            <person name="Matsumoto T."/>
        </authorList>
    </citation>
    <scope>GENOME REANNOTATION</scope>
    <source>
        <strain>cv. Nipponbare</strain>
    </source>
</reference>
<reference key="5">
    <citation type="journal article" date="2005" name="PLoS Biol.">
        <title>The genomes of Oryza sativa: a history of duplications.</title>
        <authorList>
            <person name="Yu J."/>
            <person name="Wang J."/>
            <person name="Lin W."/>
            <person name="Li S."/>
            <person name="Li H."/>
            <person name="Zhou J."/>
            <person name="Ni P."/>
            <person name="Dong W."/>
            <person name="Hu S."/>
            <person name="Zeng C."/>
            <person name="Zhang J."/>
            <person name="Zhang Y."/>
            <person name="Li R."/>
            <person name="Xu Z."/>
            <person name="Li S."/>
            <person name="Li X."/>
            <person name="Zheng H."/>
            <person name="Cong L."/>
            <person name="Lin L."/>
            <person name="Yin J."/>
            <person name="Geng J."/>
            <person name="Li G."/>
            <person name="Shi J."/>
            <person name="Liu J."/>
            <person name="Lv H."/>
            <person name="Li J."/>
            <person name="Wang J."/>
            <person name="Deng Y."/>
            <person name="Ran L."/>
            <person name="Shi X."/>
            <person name="Wang X."/>
            <person name="Wu Q."/>
            <person name="Li C."/>
            <person name="Ren X."/>
            <person name="Wang J."/>
            <person name="Wang X."/>
            <person name="Li D."/>
            <person name="Liu D."/>
            <person name="Zhang X."/>
            <person name="Ji Z."/>
            <person name="Zhao W."/>
            <person name="Sun Y."/>
            <person name="Zhang Z."/>
            <person name="Bao J."/>
            <person name="Han Y."/>
            <person name="Dong L."/>
            <person name="Ji J."/>
            <person name="Chen P."/>
            <person name="Wu S."/>
            <person name="Liu J."/>
            <person name="Xiao Y."/>
            <person name="Bu D."/>
            <person name="Tan J."/>
            <person name="Yang L."/>
            <person name="Ye C."/>
            <person name="Zhang J."/>
            <person name="Xu J."/>
            <person name="Zhou Y."/>
            <person name="Yu Y."/>
            <person name="Zhang B."/>
            <person name="Zhuang S."/>
            <person name="Wei H."/>
            <person name="Liu B."/>
            <person name="Lei M."/>
            <person name="Yu H."/>
            <person name="Li Y."/>
            <person name="Xu H."/>
            <person name="Wei S."/>
            <person name="He X."/>
            <person name="Fang L."/>
            <person name="Zhang Z."/>
            <person name="Zhang Y."/>
            <person name="Huang X."/>
            <person name="Su Z."/>
            <person name="Tong W."/>
            <person name="Li J."/>
            <person name="Tong Z."/>
            <person name="Li S."/>
            <person name="Ye J."/>
            <person name="Wang L."/>
            <person name="Fang L."/>
            <person name="Lei T."/>
            <person name="Chen C.-S."/>
            <person name="Chen H.-C."/>
            <person name="Xu Z."/>
            <person name="Li H."/>
            <person name="Huang H."/>
            <person name="Zhang F."/>
            <person name="Xu H."/>
            <person name="Li N."/>
            <person name="Zhao C."/>
            <person name="Li S."/>
            <person name="Dong L."/>
            <person name="Huang Y."/>
            <person name="Li L."/>
            <person name="Xi Y."/>
            <person name="Qi Q."/>
            <person name="Li W."/>
            <person name="Zhang B."/>
            <person name="Hu W."/>
            <person name="Zhang Y."/>
            <person name="Tian X."/>
            <person name="Jiao Y."/>
            <person name="Liang X."/>
            <person name="Jin J."/>
            <person name="Gao L."/>
            <person name="Zheng W."/>
            <person name="Hao B."/>
            <person name="Liu S.-M."/>
            <person name="Wang W."/>
            <person name="Yuan L."/>
            <person name="Cao M."/>
            <person name="McDermott J."/>
            <person name="Samudrala R."/>
            <person name="Wang J."/>
            <person name="Wong G.K.-S."/>
            <person name="Yang H."/>
        </authorList>
    </citation>
    <scope>NUCLEOTIDE SEQUENCE [LARGE SCALE GENOMIC DNA]</scope>
    <source>
        <strain>cv. Nipponbare</strain>
    </source>
</reference>
<reference key="6">
    <citation type="journal article" date="2007" name="Plant Physiol.">
        <title>Nomenclature for two-component signaling elements of rice.</title>
        <authorList>
            <person name="Schaller G.E."/>
            <person name="Doi K."/>
            <person name="Hwang I."/>
            <person name="Kieber J.J."/>
            <person name="Khurana J.P."/>
            <person name="Kurata N."/>
            <person name="Mizuno T."/>
            <person name="Pareek A."/>
            <person name="Shiu S.H."/>
            <person name="Wu P."/>
            <person name="Yip W.K."/>
        </authorList>
    </citation>
    <scope>GENE FAMILY</scope>
    <scope>NOMENCLATURE</scope>
</reference>
<accession>Q7XN30</accession>
<accession>A0A0P0W8A1</accession>
<accession>Q0JER6</accession>
<accession>Q7X609</accession>
<keyword id="KW-0010">Activator</keyword>
<keyword id="KW-0932">Cytokinin signaling pathway</keyword>
<keyword id="KW-0597">Phosphoprotein</keyword>
<keyword id="KW-1185">Reference proteome</keyword>
<keyword id="KW-0902">Two-component regulatory system</keyword>
<organism>
    <name type="scientific">Oryza sativa subsp. japonica</name>
    <name type="common">Rice</name>
    <dbReference type="NCBI Taxonomy" id="39947"/>
    <lineage>
        <taxon>Eukaryota</taxon>
        <taxon>Viridiplantae</taxon>
        <taxon>Streptophyta</taxon>
        <taxon>Embryophyta</taxon>
        <taxon>Tracheophyta</taxon>
        <taxon>Spermatophyta</taxon>
        <taxon>Magnoliopsida</taxon>
        <taxon>Liliopsida</taxon>
        <taxon>Poales</taxon>
        <taxon>Poaceae</taxon>
        <taxon>BOP clade</taxon>
        <taxon>Oryzoideae</taxon>
        <taxon>Oryzeae</taxon>
        <taxon>Oryzinae</taxon>
        <taxon>Oryza</taxon>
        <taxon>Oryza sativa</taxon>
    </lineage>
</organism>
<name>ORR42_ORYSJ</name>
<feature type="chain" id="PRO_0000433860" description="Two-component response regulator ORR42">
    <location>
        <begin position="1"/>
        <end position="132"/>
    </location>
</feature>
<feature type="domain" description="Response regulatory" evidence="2">
    <location>
        <begin position="11"/>
        <end position="125"/>
    </location>
</feature>
<feature type="modified residue" description="4-aspartylphosphate" evidence="2">
    <location>
        <position position="61"/>
    </location>
</feature>
<sequence length="132" mass="14542">MAFQTQGSNLRALLVEDIKVNRMILSQMLRKFQVETTVVQNGKEAVELFLGGETFDIVLTDNLMPIMTGPEAISKIRAMGATDVMIVGVSVDANSMEEFKDAGADLCVPKLKLEILEHILQETRSKKNKSSA</sequence>
<comment type="function">
    <text evidence="1">Functions as a response regulator involved in His-to-Asp phosphorelay signal transduction system. Phosphorylation of the Asp residue in the receiver domain activates the ability of the protein to promote the transcription of target genes. May directly activate some type-A response regulators in response to cytokinins.</text>
</comment>
<comment type="PTM">
    <text evidence="4">Two-component system major event consists of a His-to-Asp phosphorelay between a sensor histidine kinase (HK) and a response regulator (RR). In plants, the His-to-Asp phosphorelay involves an additional intermediate named Histidine-containing phosphotransfer protein (HPt). This multistep phosphorelay consists of a His-Asp-His-Asp sequential transfer of a phosphate group between first a His and an Asp of the HK protein, followed by the transfer to a conserved His of the HPt protein and finally the transfer to an Asp in the receiver domain of the RR protein.</text>
</comment>
<comment type="similarity">
    <text evidence="4">Belongs to the ARR family. Type-C subfamily.</text>
</comment>
<comment type="sequence caution" evidence="4">
    <conflict type="erroneous gene model prediction">
        <sequence resource="EMBL-CDS" id="BAF14171"/>
    </conflict>
</comment>
<protein>
    <recommendedName>
        <fullName evidence="4">Two-component response regulator ORR42</fullName>
    </recommendedName>
</protein>
<proteinExistence type="inferred from homology"/>
<dbReference type="EMBL" id="AL662960">
    <property type="protein sequence ID" value="CAE03707.1"/>
    <property type="molecule type" value="Genomic_DNA"/>
</dbReference>
<dbReference type="EMBL" id="AL662982">
    <property type="protein sequence ID" value="CAE04304.2"/>
    <property type="molecule type" value="Genomic_DNA"/>
</dbReference>
<dbReference type="EMBL" id="AP008210">
    <property type="protein sequence ID" value="BAF14171.2"/>
    <property type="status" value="ALT_SEQ"/>
    <property type="molecule type" value="Genomic_DNA"/>
</dbReference>
<dbReference type="EMBL" id="AP014960">
    <property type="protein sequence ID" value="BAS88139.1"/>
    <property type="molecule type" value="Genomic_DNA"/>
</dbReference>
<dbReference type="EMBL" id="CM000141">
    <property type="protein sequence ID" value="EAZ29793.1"/>
    <property type="molecule type" value="Genomic_DNA"/>
</dbReference>
<dbReference type="RefSeq" id="XP_015635335.1">
    <property type="nucleotide sequence ID" value="XM_015779849.1"/>
</dbReference>
<dbReference type="SMR" id="Q7XN30"/>
<dbReference type="FunCoup" id="Q7XN30">
    <property type="interactions" value="16"/>
</dbReference>
<dbReference type="STRING" id="39947.Q7XN30"/>
<dbReference type="PaxDb" id="39947-Q7XN30"/>
<dbReference type="EnsemblPlants" id="Os04t0212450-00">
    <property type="protein sequence ID" value="Os04t0212450-00"/>
    <property type="gene ID" value="Os04g0212450"/>
</dbReference>
<dbReference type="Gramene" id="Os04t0212450-00">
    <property type="protein sequence ID" value="Os04t0212450-00"/>
    <property type="gene ID" value="Os04g0212450"/>
</dbReference>
<dbReference type="KEGG" id="dosa:Os04g0212200"/>
<dbReference type="eggNOG" id="KOG0519">
    <property type="taxonomic scope" value="Eukaryota"/>
</dbReference>
<dbReference type="HOGENOM" id="CLU_000445_69_12_1"/>
<dbReference type="InParanoid" id="Q7XN30"/>
<dbReference type="OMA" id="RCTETEI"/>
<dbReference type="OrthoDB" id="21225at2759"/>
<dbReference type="Proteomes" id="UP000000763">
    <property type="component" value="Chromosome 4"/>
</dbReference>
<dbReference type="Proteomes" id="UP000007752">
    <property type="component" value="Chromosome 4"/>
</dbReference>
<dbReference type="Proteomes" id="UP000059680">
    <property type="component" value="Chromosome 4"/>
</dbReference>
<dbReference type="GO" id="GO:0009736">
    <property type="term" value="P:cytokinin-activated signaling pathway"/>
    <property type="evidence" value="ECO:0007669"/>
    <property type="project" value="UniProtKB-KW"/>
</dbReference>
<dbReference type="GO" id="GO:0000160">
    <property type="term" value="P:phosphorelay signal transduction system"/>
    <property type="evidence" value="ECO:0007669"/>
    <property type="project" value="UniProtKB-KW"/>
</dbReference>
<dbReference type="CDD" id="cd17546">
    <property type="entry name" value="REC_hyHK_CKI1_RcsC-like"/>
    <property type="match status" value="1"/>
</dbReference>
<dbReference type="Gene3D" id="3.40.50.2300">
    <property type="match status" value="1"/>
</dbReference>
<dbReference type="InterPro" id="IPR011006">
    <property type="entry name" value="CheY-like_superfamily"/>
</dbReference>
<dbReference type="InterPro" id="IPR001789">
    <property type="entry name" value="Sig_transdc_resp-reg_receiver"/>
</dbReference>
<dbReference type="InterPro" id="IPR052048">
    <property type="entry name" value="ST_Response_Regulator"/>
</dbReference>
<dbReference type="PANTHER" id="PTHR43228">
    <property type="entry name" value="TWO-COMPONENT RESPONSE REGULATOR"/>
    <property type="match status" value="1"/>
</dbReference>
<dbReference type="PANTHER" id="PTHR43228:SF24">
    <property type="entry name" value="TWO-COMPONENT RESPONSE REGULATOR ORR42"/>
    <property type="match status" value="1"/>
</dbReference>
<dbReference type="Pfam" id="PF00072">
    <property type="entry name" value="Response_reg"/>
    <property type="match status" value="1"/>
</dbReference>
<dbReference type="SMART" id="SM00448">
    <property type="entry name" value="REC"/>
    <property type="match status" value="1"/>
</dbReference>
<dbReference type="SUPFAM" id="SSF52172">
    <property type="entry name" value="CheY-like"/>
    <property type="match status" value="1"/>
</dbReference>
<dbReference type="PROSITE" id="PS50110">
    <property type="entry name" value="RESPONSE_REGULATORY"/>
    <property type="match status" value="1"/>
</dbReference>
<gene>
    <name evidence="3" type="primary">RR42</name>
    <name evidence="5" type="ordered locus">Os04g0212450</name>
    <name evidence="4" type="ordered locus">LOC_Os04g13480</name>
    <name evidence="8" type="ORF">OsJ_13850</name>
    <name evidence="6" type="ORF">OSJNBa0021F22.1</name>
    <name evidence="7" type="ORF">OSJNBa0083I11.14</name>
</gene>
<evidence type="ECO:0000250" key="1">
    <source>
        <dbReference type="UniProtKB" id="Q940D0"/>
    </source>
</evidence>
<evidence type="ECO:0000255" key="2">
    <source>
        <dbReference type="PROSITE-ProRule" id="PRU00169"/>
    </source>
</evidence>
<evidence type="ECO:0000303" key="3">
    <source>
    </source>
</evidence>
<evidence type="ECO:0000305" key="4"/>
<evidence type="ECO:0000312" key="5">
    <source>
        <dbReference type="EMBL" id="BAF14171.2"/>
    </source>
</evidence>
<evidence type="ECO:0000312" key="6">
    <source>
        <dbReference type="EMBL" id="CAE03707.1"/>
    </source>
</evidence>
<evidence type="ECO:0000312" key="7">
    <source>
        <dbReference type="EMBL" id="CAE04304.2"/>
    </source>
</evidence>
<evidence type="ECO:0000312" key="8">
    <source>
        <dbReference type="EMBL" id="EAZ29793.1"/>
    </source>
</evidence>